<dbReference type="EC" id="2.6.99.2" evidence="1"/>
<dbReference type="EMBL" id="BX640447">
    <property type="protein sequence ID" value="CAE33838.1"/>
    <property type="molecule type" value="Genomic_DNA"/>
</dbReference>
<dbReference type="RefSeq" id="WP_003810344.1">
    <property type="nucleotide sequence ID" value="NC_002927.3"/>
</dbReference>
<dbReference type="SMR" id="Q7WH63"/>
<dbReference type="GeneID" id="93203526"/>
<dbReference type="KEGG" id="bbr:BB3346"/>
<dbReference type="eggNOG" id="COG0854">
    <property type="taxonomic scope" value="Bacteria"/>
</dbReference>
<dbReference type="HOGENOM" id="CLU_074563_0_0_4"/>
<dbReference type="UniPathway" id="UPA00244">
    <property type="reaction ID" value="UER00313"/>
</dbReference>
<dbReference type="Proteomes" id="UP000001027">
    <property type="component" value="Chromosome"/>
</dbReference>
<dbReference type="GO" id="GO:0005829">
    <property type="term" value="C:cytosol"/>
    <property type="evidence" value="ECO:0007669"/>
    <property type="project" value="TreeGrafter"/>
</dbReference>
<dbReference type="GO" id="GO:0033856">
    <property type="term" value="F:pyridoxine 5'-phosphate synthase activity"/>
    <property type="evidence" value="ECO:0007669"/>
    <property type="project" value="UniProtKB-EC"/>
</dbReference>
<dbReference type="GO" id="GO:0008615">
    <property type="term" value="P:pyridoxine biosynthetic process"/>
    <property type="evidence" value="ECO:0007669"/>
    <property type="project" value="UniProtKB-UniRule"/>
</dbReference>
<dbReference type="CDD" id="cd00003">
    <property type="entry name" value="PNPsynthase"/>
    <property type="match status" value="1"/>
</dbReference>
<dbReference type="FunFam" id="3.20.20.70:FF:000042">
    <property type="entry name" value="Pyridoxine 5'-phosphate synthase"/>
    <property type="match status" value="1"/>
</dbReference>
<dbReference type="Gene3D" id="3.20.20.70">
    <property type="entry name" value="Aldolase class I"/>
    <property type="match status" value="1"/>
</dbReference>
<dbReference type="HAMAP" id="MF_00279">
    <property type="entry name" value="PdxJ"/>
    <property type="match status" value="1"/>
</dbReference>
<dbReference type="InterPro" id="IPR013785">
    <property type="entry name" value="Aldolase_TIM"/>
</dbReference>
<dbReference type="InterPro" id="IPR004569">
    <property type="entry name" value="PyrdxlP_synth_PdxJ"/>
</dbReference>
<dbReference type="InterPro" id="IPR036130">
    <property type="entry name" value="Pyridoxine-5'_phos_synth"/>
</dbReference>
<dbReference type="NCBIfam" id="TIGR00559">
    <property type="entry name" value="pdxJ"/>
    <property type="match status" value="1"/>
</dbReference>
<dbReference type="NCBIfam" id="NF003623">
    <property type="entry name" value="PRK05265.1-1"/>
    <property type="match status" value="1"/>
</dbReference>
<dbReference type="NCBIfam" id="NF003625">
    <property type="entry name" value="PRK05265.1-3"/>
    <property type="match status" value="1"/>
</dbReference>
<dbReference type="NCBIfam" id="NF003627">
    <property type="entry name" value="PRK05265.1-5"/>
    <property type="match status" value="1"/>
</dbReference>
<dbReference type="PANTHER" id="PTHR30456">
    <property type="entry name" value="PYRIDOXINE 5'-PHOSPHATE SYNTHASE"/>
    <property type="match status" value="1"/>
</dbReference>
<dbReference type="PANTHER" id="PTHR30456:SF0">
    <property type="entry name" value="PYRIDOXINE 5'-PHOSPHATE SYNTHASE"/>
    <property type="match status" value="1"/>
</dbReference>
<dbReference type="Pfam" id="PF03740">
    <property type="entry name" value="PdxJ"/>
    <property type="match status" value="1"/>
</dbReference>
<dbReference type="SUPFAM" id="SSF63892">
    <property type="entry name" value="Pyridoxine 5'-phosphate synthase"/>
    <property type="match status" value="1"/>
</dbReference>
<keyword id="KW-0963">Cytoplasm</keyword>
<keyword id="KW-0664">Pyridoxine biosynthesis</keyword>
<keyword id="KW-0808">Transferase</keyword>
<evidence type="ECO:0000255" key="1">
    <source>
        <dbReference type="HAMAP-Rule" id="MF_00279"/>
    </source>
</evidence>
<accession>Q7WH63</accession>
<organism>
    <name type="scientific">Bordetella bronchiseptica (strain ATCC BAA-588 / NCTC 13252 / RB50)</name>
    <name type="common">Alcaligenes bronchisepticus</name>
    <dbReference type="NCBI Taxonomy" id="257310"/>
    <lineage>
        <taxon>Bacteria</taxon>
        <taxon>Pseudomonadati</taxon>
        <taxon>Pseudomonadota</taxon>
        <taxon>Betaproteobacteria</taxon>
        <taxon>Burkholderiales</taxon>
        <taxon>Alcaligenaceae</taxon>
        <taxon>Bordetella</taxon>
    </lineage>
</organism>
<sequence>MIELGVNIDHVATLRQQRHTAYPDPVQAALRAEDAGADLITLHLREDRRHIQDADVYAIRPLLRTRMNLECAVTPEMLEIACAVKPSDVCLVPEKRTELTTEGGLDVAGAQAAVTDAVQLLAEAGIRVSLFIDPDARQIEAAARAGAPVIELHTGAYAEARDDAAVQAELARVRAAVAEGLRHGLRVNAGHGLHYGNVQAVAALDGIAELNIGHAIVAQSIFDGWDKAVRDMKALMVQARLAAVRGHA</sequence>
<proteinExistence type="inferred from homology"/>
<name>PDXJ_BORBR</name>
<gene>
    <name evidence="1" type="primary">pdxJ</name>
    <name type="ordered locus">BB3346</name>
</gene>
<reference key="1">
    <citation type="journal article" date="2003" name="Nat. Genet.">
        <title>Comparative analysis of the genome sequences of Bordetella pertussis, Bordetella parapertussis and Bordetella bronchiseptica.</title>
        <authorList>
            <person name="Parkhill J."/>
            <person name="Sebaihia M."/>
            <person name="Preston A."/>
            <person name="Murphy L.D."/>
            <person name="Thomson N.R."/>
            <person name="Harris D.E."/>
            <person name="Holden M.T.G."/>
            <person name="Churcher C.M."/>
            <person name="Bentley S.D."/>
            <person name="Mungall K.L."/>
            <person name="Cerdeno-Tarraga A.-M."/>
            <person name="Temple L."/>
            <person name="James K.D."/>
            <person name="Harris B."/>
            <person name="Quail M.A."/>
            <person name="Achtman M."/>
            <person name="Atkin R."/>
            <person name="Baker S."/>
            <person name="Basham D."/>
            <person name="Bason N."/>
            <person name="Cherevach I."/>
            <person name="Chillingworth T."/>
            <person name="Collins M."/>
            <person name="Cronin A."/>
            <person name="Davis P."/>
            <person name="Doggett J."/>
            <person name="Feltwell T."/>
            <person name="Goble A."/>
            <person name="Hamlin N."/>
            <person name="Hauser H."/>
            <person name="Holroyd S."/>
            <person name="Jagels K."/>
            <person name="Leather S."/>
            <person name="Moule S."/>
            <person name="Norberczak H."/>
            <person name="O'Neil S."/>
            <person name="Ormond D."/>
            <person name="Price C."/>
            <person name="Rabbinowitsch E."/>
            <person name="Rutter S."/>
            <person name="Sanders M."/>
            <person name="Saunders D."/>
            <person name="Seeger K."/>
            <person name="Sharp S."/>
            <person name="Simmonds M."/>
            <person name="Skelton J."/>
            <person name="Squares R."/>
            <person name="Squares S."/>
            <person name="Stevens K."/>
            <person name="Unwin L."/>
            <person name="Whitehead S."/>
            <person name="Barrell B.G."/>
            <person name="Maskell D.J."/>
        </authorList>
    </citation>
    <scope>NUCLEOTIDE SEQUENCE [LARGE SCALE GENOMIC DNA]</scope>
    <source>
        <strain>ATCC BAA-588 / NCTC 13252 / RB50</strain>
    </source>
</reference>
<feature type="chain" id="PRO_0000231787" description="Pyridoxine 5'-phosphate synthase">
    <location>
        <begin position="1"/>
        <end position="248"/>
    </location>
</feature>
<feature type="active site" description="Proton acceptor" evidence="1">
    <location>
        <position position="43"/>
    </location>
</feature>
<feature type="active site" description="Proton acceptor" evidence="1">
    <location>
        <position position="70"/>
    </location>
</feature>
<feature type="active site" description="Proton donor" evidence="1">
    <location>
        <position position="191"/>
    </location>
</feature>
<feature type="binding site" evidence="1">
    <location>
        <position position="7"/>
    </location>
    <ligand>
        <name>3-amino-2-oxopropyl phosphate</name>
        <dbReference type="ChEBI" id="CHEBI:57279"/>
    </ligand>
</feature>
<feature type="binding site" evidence="1">
    <location>
        <begin position="9"/>
        <end position="10"/>
    </location>
    <ligand>
        <name>1-deoxy-D-xylulose 5-phosphate</name>
        <dbReference type="ChEBI" id="CHEBI:57792"/>
    </ligand>
</feature>
<feature type="binding site" evidence="1">
    <location>
        <position position="18"/>
    </location>
    <ligand>
        <name>3-amino-2-oxopropyl phosphate</name>
        <dbReference type="ChEBI" id="CHEBI:57279"/>
    </ligand>
</feature>
<feature type="binding site" evidence="1">
    <location>
        <position position="45"/>
    </location>
    <ligand>
        <name>1-deoxy-D-xylulose 5-phosphate</name>
        <dbReference type="ChEBI" id="CHEBI:57792"/>
    </ligand>
</feature>
<feature type="binding site" evidence="1">
    <location>
        <position position="50"/>
    </location>
    <ligand>
        <name>1-deoxy-D-xylulose 5-phosphate</name>
        <dbReference type="ChEBI" id="CHEBI:57792"/>
    </ligand>
</feature>
<feature type="binding site" evidence="1">
    <location>
        <position position="100"/>
    </location>
    <ligand>
        <name>1-deoxy-D-xylulose 5-phosphate</name>
        <dbReference type="ChEBI" id="CHEBI:57792"/>
    </ligand>
</feature>
<feature type="binding site" evidence="1">
    <location>
        <position position="192"/>
    </location>
    <ligand>
        <name>3-amino-2-oxopropyl phosphate</name>
        <dbReference type="ChEBI" id="CHEBI:57279"/>
    </ligand>
</feature>
<feature type="binding site" evidence="1">
    <location>
        <begin position="213"/>
        <end position="214"/>
    </location>
    <ligand>
        <name>3-amino-2-oxopropyl phosphate</name>
        <dbReference type="ChEBI" id="CHEBI:57279"/>
    </ligand>
</feature>
<feature type="site" description="Transition state stabilizer" evidence="1">
    <location>
        <position position="151"/>
    </location>
</feature>
<protein>
    <recommendedName>
        <fullName evidence="1">Pyridoxine 5'-phosphate synthase</fullName>
        <shortName evidence="1">PNP synthase</shortName>
        <ecNumber evidence="1">2.6.99.2</ecNumber>
    </recommendedName>
</protein>
<comment type="function">
    <text evidence="1">Catalyzes the complicated ring closure reaction between the two acyclic compounds 1-deoxy-D-xylulose-5-phosphate (DXP) and 3-amino-2-oxopropyl phosphate (1-amino-acetone-3-phosphate or AAP) to form pyridoxine 5'-phosphate (PNP) and inorganic phosphate.</text>
</comment>
<comment type="catalytic activity">
    <reaction evidence="1">
        <text>3-amino-2-oxopropyl phosphate + 1-deoxy-D-xylulose 5-phosphate = pyridoxine 5'-phosphate + phosphate + 2 H2O + H(+)</text>
        <dbReference type="Rhea" id="RHEA:15265"/>
        <dbReference type="ChEBI" id="CHEBI:15377"/>
        <dbReference type="ChEBI" id="CHEBI:15378"/>
        <dbReference type="ChEBI" id="CHEBI:43474"/>
        <dbReference type="ChEBI" id="CHEBI:57279"/>
        <dbReference type="ChEBI" id="CHEBI:57792"/>
        <dbReference type="ChEBI" id="CHEBI:58589"/>
        <dbReference type="EC" id="2.6.99.2"/>
    </reaction>
</comment>
<comment type="pathway">
    <text evidence="1">Cofactor biosynthesis; pyridoxine 5'-phosphate biosynthesis; pyridoxine 5'-phosphate from D-erythrose 4-phosphate: step 5/5.</text>
</comment>
<comment type="subunit">
    <text evidence="1">Homooctamer; tetramer of dimers.</text>
</comment>
<comment type="subcellular location">
    <subcellularLocation>
        <location evidence="1">Cytoplasm</location>
    </subcellularLocation>
</comment>
<comment type="similarity">
    <text evidence="1">Belongs to the PNP synthase family.</text>
</comment>